<accession>A6W6U5</accession>
<proteinExistence type="inferred from homology"/>
<protein>
    <recommendedName>
        <fullName evidence="1">4-diphosphocytidyl-2-C-methyl-D-erythritol kinase</fullName>
        <shortName evidence="1">CMK</shortName>
        <ecNumber evidence="1">2.7.1.148</ecNumber>
    </recommendedName>
    <alternativeName>
        <fullName evidence="1">4-(cytidine-5'-diphospho)-2-C-methyl-D-erythritol kinase</fullName>
    </alternativeName>
</protein>
<feature type="chain" id="PRO_0000335721" description="4-diphosphocytidyl-2-C-methyl-D-erythritol kinase">
    <location>
        <begin position="1"/>
        <end position="325"/>
    </location>
</feature>
<feature type="region of interest" description="Disordered" evidence="2">
    <location>
        <begin position="306"/>
        <end position="325"/>
    </location>
</feature>
<feature type="active site" evidence="1">
    <location>
        <position position="22"/>
    </location>
</feature>
<feature type="active site" evidence="1">
    <location>
        <position position="152"/>
    </location>
</feature>
<feature type="binding site" evidence="1">
    <location>
        <begin position="110"/>
        <end position="120"/>
    </location>
    <ligand>
        <name>ATP</name>
        <dbReference type="ChEBI" id="CHEBI:30616"/>
    </ligand>
</feature>
<keyword id="KW-0067">ATP-binding</keyword>
<keyword id="KW-0414">Isoprene biosynthesis</keyword>
<keyword id="KW-0418">Kinase</keyword>
<keyword id="KW-0547">Nucleotide-binding</keyword>
<keyword id="KW-1185">Reference proteome</keyword>
<keyword id="KW-0808">Transferase</keyword>
<organism>
    <name type="scientific">Kineococcus radiotolerans (strain ATCC BAA-149 / DSM 14245 / SRS30216)</name>
    <dbReference type="NCBI Taxonomy" id="266940"/>
    <lineage>
        <taxon>Bacteria</taxon>
        <taxon>Bacillati</taxon>
        <taxon>Actinomycetota</taxon>
        <taxon>Actinomycetes</taxon>
        <taxon>Kineosporiales</taxon>
        <taxon>Kineosporiaceae</taxon>
        <taxon>Kineococcus</taxon>
    </lineage>
</organism>
<comment type="function">
    <text evidence="1">Catalyzes the phosphorylation of the position 2 hydroxy group of 4-diphosphocytidyl-2C-methyl-D-erythritol.</text>
</comment>
<comment type="catalytic activity">
    <reaction evidence="1">
        <text>4-CDP-2-C-methyl-D-erythritol + ATP = 4-CDP-2-C-methyl-D-erythritol 2-phosphate + ADP + H(+)</text>
        <dbReference type="Rhea" id="RHEA:18437"/>
        <dbReference type="ChEBI" id="CHEBI:15378"/>
        <dbReference type="ChEBI" id="CHEBI:30616"/>
        <dbReference type="ChEBI" id="CHEBI:57823"/>
        <dbReference type="ChEBI" id="CHEBI:57919"/>
        <dbReference type="ChEBI" id="CHEBI:456216"/>
        <dbReference type="EC" id="2.7.1.148"/>
    </reaction>
</comment>
<comment type="pathway">
    <text evidence="1">Isoprenoid biosynthesis; isopentenyl diphosphate biosynthesis via DXP pathway; isopentenyl diphosphate from 1-deoxy-D-xylulose 5-phosphate: step 3/6.</text>
</comment>
<comment type="similarity">
    <text evidence="1">Belongs to the GHMP kinase family. IspE subfamily.</text>
</comment>
<sequence length="325" mass="32584">MPGSPDPAPPELASVTARAPAKVNLLLQVGPRRDDGYHDLVTVFQAVSLHEEVTVTPADEFGITVEGVGGTDVGGVPLDGTNLALRAARLLAERAGVDRAVHVHVRKEVPVAGGMAGGSADAAAALVACDSLWRLRLGLDALAELGAELGSDVPFGLHGRTAVGTGRGEHLVPVLTGASSAWVFVLAEGGLSTPAVFAECDRRREATGHDAPPGRLEAVEAALRGGDVDALGAALSNDLQDAACALDPALAGTVAAGRRAGAVAGIVSGSGPTVALLARSPAAARRLALDLEPLFGAERLRTATGPAPGARVLEAVSTPSPGGRS</sequence>
<gene>
    <name evidence="1" type="primary">ispE</name>
    <name type="ordered locus">Krad_1046</name>
</gene>
<evidence type="ECO:0000255" key="1">
    <source>
        <dbReference type="HAMAP-Rule" id="MF_00061"/>
    </source>
</evidence>
<evidence type="ECO:0000256" key="2">
    <source>
        <dbReference type="SAM" id="MobiDB-lite"/>
    </source>
</evidence>
<dbReference type="EC" id="2.7.1.148" evidence="1"/>
<dbReference type="EMBL" id="CP000750">
    <property type="protein sequence ID" value="ABS02534.1"/>
    <property type="molecule type" value="Genomic_DNA"/>
</dbReference>
<dbReference type="RefSeq" id="WP_012084614.1">
    <property type="nucleotide sequence ID" value="NC_009664.2"/>
</dbReference>
<dbReference type="SMR" id="A6W6U5"/>
<dbReference type="STRING" id="266940.Krad_1046"/>
<dbReference type="KEGG" id="kra:Krad_1046"/>
<dbReference type="eggNOG" id="COG1947">
    <property type="taxonomic scope" value="Bacteria"/>
</dbReference>
<dbReference type="HOGENOM" id="CLU_053057_1_1_11"/>
<dbReference type="OrthoDB" id="3173073at2"/>
<dbReference type="UniPathway" id="UPA00056">
    <property type="reaction ID" value="UER00094"/>
</dbReference>
<dbReference type="Proteomes" id="UP000001116">
    <property type="component" value="Chromosome"/>
</dbReference>
<dbReference type="GO" id="GO:0050515">
    <property type="term" value="F:4-(cytidine 5'-diphospho)-2-C-methyl-D-erythritol kinase activity"/>
    <property type="evidence" value="ECO:0007669"/>
    <property type="project" value="UniProtKB-UniRule"/>
</dbReference>
<dbReference type="GO" id="GO:0005524">
    <property type="term" value="F:ATP binding"/>
    <property type="evidence" value="ECO:0007669"/>
    <property type="project" value="UniProtKB-UniRule"/>
</dbReference>
<dbReference type="GO" id="GO:0019288">
    <property type="term" value="P:isopentenyl diphosphate biosynthetic process, methylerythritol 4-phosphate pathway"/>
    <property type="evidence" value="ECO:0007669"/>
    <property type="project" value="UniProtKB-UniRule"/>
</dbReference>
<dbReference type="GO" id="GO:0016114">
    <property type="term" value="P:terpenoid biosynthetic process"/>
    <property type="evidence" value="ECO:0007669"/>
    <property type="project" value="InterPro"/>
</dbReference>
<dbReference type="Gene3D" id="3.30.230.10">
    <property type="match status" value="1"/>
</dbReference>
<dbReference type="Gene3D" id="3.30.70.890">
    <property type="entry name" value="GHMP kinase, C-terminal domain"/>
    <property type="match status" value="1"/>
</dbReference>
<dbReference type="HAMAP" id="MF_00061">
    <property type="entry name" value="IspE"/>
    <property type="match status" value="1"/>
</dbReference>
<dbReference type="InterPro" id="IPR013750">
    <property type="entry name" value="GHMP_kinase_C_dom"/>
</dbReference>
<dbReference type="InterPro" id="IPR036554">
    <property type="entry name" value="GHMP_kinase_C_sf"/>
</dbReference>
<dbReference type="InterPro" id="IPR006204">
    <property type="entry name" value="GHMP_kinase_N_dom"/>
</dbReference>
<dbReference type="InterPro" id="IPR004424">
    <property type="entry name" value="IspE"/>
</dbReference>
<dbReference type="InterPro" id="IPR020568">
    <property type="entry name" value="Ribosomal_Su5_D2-typ_SF"/>
</dbReference>
<dbReference type="InterPro" id="IPR014721">
    <property type="entry name" value="Ribsml_uS5_D2-typ_fold_subgr"/>
</dbReference>
<dbReference type="NCBIfam" id="TIGR00154">
    <property type="entry name" value="ispE"/>
    <property type="match status" value="1"/>
</dbReference>
<dbReference type="NCBIfam" id="NF002870">
    <property type="entry name" value="PRK03188.1"/>
    <property type="match status" value="1"/>
</dbReference>
<dbReference type="PANTHER" id="PTHR43527">
    <property type="entry name" value="4-DIPHOSPHOCYTIDYL-2-C-METHYL-D-ERYTHRITOL KINASE, CHLOROPLASTIC"/>
    <property type="match status" value="1"/>
</dbReference>
<dbReference type="PANTHER" id="PTHR43527:SF2">
    <property type="entry name" value="4-DIPHOSPHOCYTIDYL-2-C-METHYL-D-ERYTHRITOL KINASE, CHLOROPLASTIC"/>
    <property type="match status" value="1"/>
</dbReference>
<dbReference type="Pfam" id="PF08544">
    <property type="entry name" value="GHMP_kinases_C"/>
    <property type="match status" value="1"/>
</dbReference>
<dbReference type="Pfam" id="PF00288">
    <property type="entry name" value="GHMP_kinases_N"/>
    <property type="match status" value="1"/>
</dbReference>
<dbReference type="PIRSF" id="PIRSF010376">
    <property type="entry name" value="IspE"/>
    <property type="match status" value="1"/>
</dbReference>
<dbReference type="SUPFAM" id="SSF55060">
    <property type="entry name" value="GHMP Kinase, C-terminal domain"/>
    <property type="match status" value="1"/>
</dbReference>
<dbReference type="SUPFAM" id="SSF54211">
    <property type="entry name" value="Ribosomal protein S5 domain 2-like"/>
    <property type="match status" value="1"/>
</dbReference>
<reference key="1">
    <citation type="journal article" date="2008" name="PLoS ONE">
        <title>Survival in nuclear waste, extreme resistance, and potential applications gleaned from the genome sequence of Kineococcus radiotolerans SRS30216.</title>
        <authorList>
            <person name="Bagwell C.E."/>
            <person name="Bhat S."/>
            <person name="Hawkins G.M."/>
            <person name="Smith B.W."/>
            <person name="Biswas T."/>
            <person name="Hoover T.R."/>
            <person name="Saunders E."/>
            <person name="Han C.S."/>
            <person name="Tsodikov O.V."/>
            <person name="Shimkets L.J."/>
        </authorList>
    </citation>
    <scope>NUCLEOTIDE SEQUENCE [LARGE SCALE GENOMIC DNA]</scope>
    <source>
        <strain>ATCC BAA-149 / DSM 14245 / SRS30216</strain>
    </source>
</reference>
<name>ISPE_KINRD</name>